<dbReference type="EC" id="3.5.1.5" evidence="1"/>
<dbReference type="EMBL" id="BA000030">
    <property type="protein sequence ID" value="BAC74817.1"/>
    <property type="molecule type" value="Genomic_DNA"/>
</dbReference>
<dbReference type="RefSeq" id="WP_010988501.1">
    <property type="nucleotide sequence ID" value="NZ_JZJK01000085.1"/>
</dbReference>
<dbReference type="SMR" id="Q826R9"/>
<dbReference type="GeneID" id="41544179"/>
<dbReference type="KEGG" id="sma:SAVERM_7106"/>
<dbReference type="eggNOG" id="COG0804">
    <property type="taxonomic scope" value="Bacteria"/>
</dbReference>
<dbReference type="HOGENOM" id="CLU_000980_0_0_11"/>
<dbReference type="OrthoDB" id="9802793at2"/>
<dbReference type="UniPathway" id="UPA00258">
    <property type="reaction ID" value="UER00370"/>
</dbReference>
<dbReference type="Proteomes" id="UP000000428">
    <property type="component" value="Chromosome"/>
</dbReference>
<dbReference type="GO" id="GO:0005737">
    <property type="term" value="C:cytoplasm"/>
    <property type="evidence" value="ECO:0007669"/>
    <property type="project" value="UniProtKB-SubCell"/>
</dbReference>
<dbReference type="GO" id="GO:0016151">
    <property type="term" value="F:nickel cation binding"/>
    <property type="evidence" value="ECO:0007669"/>
    <property type="project" value="UniProtKB-UniRule"/>
</dbReference>
<dbReference type="GO" id="GO:0009039">
    <property type="term" value="F:urease activity"/>
    <property type="evidence" value="ECO:0007669"/>
    <property type="project" value="UniProtKB-UniRule"/>
</dbReference>
<dbReference type="GO" id="GO:0043419">
    <property type="term" value="P:urea catabolic process"/>
    <property type="evidence" value="ECO:0007669"/>
    <property type="project" value="UniProtKB-UniRule"/>
</dbReference>
<dbReference type="CDD" id="cd00375">
    <property type="entry name" value="Urease_alpha"/>
    <property type="match status" value="1"/>
</dbReference>
<dbReference type="Gene3D" id="3.20.20.140">
    <property type="entry name" value="Metal-dependent hydrolases"/>
    <property type="match status" value="1"/>
</dbReference>
<dbReference type="Gene3D" id="2.30.40.10">
    <property type="entry name" value="Urease, subunit C, domain 1"/>
    <property type="match status" value="1"/>
</dbReference>
<dbReference type="HAMAP" id="MF_01953">
    <property type="entry name" value="Urease_alpha"/>
    <property type="match status" value="1"/>
</dbReference>
<dbReference type="InterPro" id="IPR006680">
    <property type="entry name" value="Amidohydro-rel"/>
</dbReference>
<dbReference type="InterPro" id="IPR011059">
    <property type="entry name" value="Metal-dep_hydrolase_composite"/>
</dbReference>
<dbReference type="InterPro" id="IPR032466">
    <property type="entry name" value="Metal_Hydrolase"/>
</dbReference>
<dbReference type="InterPro" id="IPR011612">
    <property type="entry name" value="Urease_alpha_N_dom"/>
</dbReference>
<dbReference type="InterPro" id="IPR050112">
    <property type="entry name" value="Urease_alpha_subunit"/>
</dbReference>
<dbReference type="InterPro" id="IPR017950">
    <property type="entry name" value="Urease_AS"/>
</dbReference>
<dbReference type="InterPro" id="IPR005848">
    <property type="entry name" value="Urease_asu"/>
</dbReference>
<dbReference type="InterPro" id="IPR017951">
    <property type="entry name" value="Urease_asu_c"/>
</dbReference>
<dbReference type="InterPro" id="IPR029754">
    <property type="entry name" value="Urease_Ni-bd"/>
</dbReference>
<dbReference type="NCBIfam" id="NF009685">
    <property type="entry name" value="PRK13206.1"/>
    <property type="match status" value="1"/>
</dbReference>
<dbReference type="NCBIfam" id="NF009686">
    <property type="entry name" value="PRK13207.1"/>
    <property type="match status" value="1"/>
</dbReference>
<dbReference type="NCBIfam" id="TIGR01792">
    <property type="entry name" value="urease_alph"/>
    <property type="match status" value="1"/>
</dbReference>
<dbReference type="PANTHER" id="PTHR43440">
    <property type="entry name" value="UREASE"/>
    <property type="match status" value="1"/>
</dbReference>
<dbReference type="PANTHER" id="PTHR43440:SF1">
    <property type="entry name" value="UREASE"/>
    <property type="match status" value="1"/>
</dbReference>
<dbReference type="Pfam" id="PF01979">
    <property type="entry name" value="Amidohydro_1"/>
    <property type="match status" value="1"/>
</dbReference>
<dbReference type="Pfam" id="PF00449">
    <property type="entry name" value="Urease_alpha"/>
    <property type="match status" value="1"/>
</dbReference>
<dbReference type="PRINTS" id="PR01752">
    <property type="entry name" value="UREASE"/>
</dbReference>
<dbReference type="SUPFAM" id="SSF51338">
    <property type="entry name" value="Composite domain of metallo-dependent hydrolases"/>
    <property type="match status" value="1"/>
</dbReference>
<dbReference type="SUPFAM" id="SSF51556">
    <property type="entry name" value="Metallo-dependent hydrolases"/>
    <property type="match status" value="1"/>
</dbReference>
<dbReference type="PROSITE" id="PS01120">
    <property type="entry name" value="UREASE_1"/>
    <property type="match status" value="1"/>
</dbReference>
<dbReference type="PROSITE" id="PS00145">
    <property type="entry name" value="UREASE_2"/>
    <property type="match status" value="1"/>
</dbReference>
<dbReference type="PROSITE" id="PS51368">
    <property type="entry name" value="UREASE_3"/>
    <property type="match status" value="1"/>
</dbReference>
<reference key="1">
    <citation type="journal article" date="2001" name="Proc. Natl. Acad. Sci. U.S.A.">
        <title>Genome sequence of an industrial microorganism Streptomyces avermitilis: deducing the ability of producing secondary metabolites.</title>
        <authorList>
            <person name="Omura S."/>
            <person name="Ikeda H."/>
            <person name="Ishikawa J."/>
            <person name="Hanamoto A."/>
            <person name="Takahashi C."/>
            <person name="Shinose M."/>
            <person name="Takahashi Y."/>
            <person name="Horikawa H."/>
            <person name="Nakazawa H."/>
            <person name="Osonoe T."/>
            <person name="Kikuchi H."/>
            <person name="Shiba T."/>
            <person name="Sakaki Y."/>
            <person name="Hattori M."/>
        </authorList>
    </citation>
    <scope>NUCLEOTIDE SEQUENCE [LARGE SCALE GENOMIC DNA]</scope>
    <source>
        <strain>ATCC 31267 / DSM 46492 / JCM 5070 / NBRC 14893 / NCIMB 12804 / NRRL 8165 / MA-4680</strain>
    </source>
</reference>
<reference key="2">
    <citation type="journal article" date="2003" name="Nat. Biotechnol.">
        <title>Complete genome sequence and comparative analysis of the industrial microorganism Streptomyces avermitilis.</title>
        <authorList>
            <person name="Ikeda H."/>
            <person name="Ishikawa J."/>
            <person name="Hanamoto A."/>
            <person name="Shinose M."/>
            <person name="Kikuchi H."/>
            <person name="Shiba T."/>
            <person name="Sakaki Y."/>
            <person name="Hattori M."/>
            <person name="Omura S."/>
        </authorList>
    </citation>
    <scope>NUCLEOTIDE SEQUENCE [LARGE SCALE GENOMIC DNA]</scope>
    <source>
        <strain>ATCC 31267 / DSM 46492 / JCM 5070 / NBRC 14893 / NCIMB 12804 / NRRL 8165 / MA-4680</strain>
    </source>
</reference>
<keyword id="KW-0963">Cytoplasm</keyword>
<keyword id="KW-0378">Hydrolase</keyword>
<keyword id="KW-0479">Metal-binding</keyword>
<keyword id="KW-0533">Nickel</keyword>
<keyword id="KW-1185">Reference proteome</keyword>
<comment type="catalytic activity">
    <reaction evidence="1">
        <text>urea + 2 H2O + H(+) = hydrogencarbonate + 2 NH4(+)</text>
        <dbReference type="Rhea" id="RHEA:20557"/>
        <dbReference type="ChEBI" id="CHEBI:15377"/>
        <dbReference type="ChEBI" id="CHEBI:15378"/>
        <dbReference type="ChEBI" id="CHEBI:16199"/>
        <dbReference type="ChEBI" id="CHEBI:17544"/>
        <dbReference type="ChEBI" id="CHEBI:28938"/>
        <dbReference type="EC" id="3.5.1.5"/>
    </reaction>
</comment>
<comment type="cofactor">
    <cofactor evidence="1">
        <name>Ni cation</name>
        <dbReference type="ChEBI" id="CHEBI:25516"/>
    </cofactor>
    <text evidence="1">Binds 2 nickel ions per subunit.</text>
</comment>
<comment type="pathway">
    <text evidence="1">Nitrogen metabolism; urea degradation; CO(2) and NH(3) from urea (urease route): step 1/1.</text>
</comment>
<comment type="subunit">
    <text evidence="1">May form a heterohexamer of 3 UreC (alpha) and 3 UreAB (gamma/beta) subunits. May also form a heterotrimer of UreA (gamma), UreB (beta) and UreC (alpha) subunits. Three heterotrimers associate to form the active enzyme.</text>
</comment>
<comment type="subcellular location">
    <subcellularLocation>
        <location evidence="1">Cytoplasm</location>
    </subcellularLocation>
</comment>
<comment type="PTM">
    <text evidence="1">Carboxylation allows a single lysine to coordinate two nickel ions.</text>
</comment>
<comment type="similarity">
    <text evidence="1">Belongs to the metallo-dependent hydrolases superfamily. Urease alpha subunit family.</text>
</comment>
<feature type="chain" id="PRO_0000234186" description="Urease subunit alpha 2">
    <location>
        <begin position="1"/>
        <end position="573"/>
    </location>
</feature>
<feature type="domain" description="Urease" evidence="1">
    <location>
        <begin position="136"/>
        <end position="573"/>
    </location>
</feature>
<feature type="active site" description="Proton donor" evidence="1">
    <location>
        <position position="327"/>
    </location>
</feature>
<feature type="binding site" evidence="1">
    <location>
        <position position="141"/>
    </location>
    <ligand>
        <name>Ni(2+)</name>
        <dbReference type="ChEBI" id="CHEBI:49786"/>
        <label>1</label>
    </ligand>
</feature>
<feature type="binding site" evidence="1">
    <location>
        <position position="143"/>
    </location>
    <ligand>
        <name>Ni(2+)</name>
        <dbReference type="ChEBI" id="CHEBI:49786"/>
        <label>1</label>
    </ligand>
</feature>
<feature type="binding site" description="via carbamate group" evidence="1">
    <location>
        <position position="224"/>
    </location>
    <ligand>
        <name>Ni(2+)</name>
        <dbReference type="ChEBI" id="CHEBI:49786"/>
        <label>1</label>
    </ligand>
</feature>
<feature type="binding site" description="via carbamate group" evidence="1">
    <location>
        <position position="224"/>
    </location>
    <ligand>
        <name>Ni(2+)</name>
        <dbReference type="ChEBI" id="CHEBI:49786"/>
        <label>2</label>
    </ligand>
</feature>
<feature type="binding site" evidence="1">
    <location>
        <position position="226"/>
    </location>
    <ligand>
        <name>substrate</name>
    </ligand>
</feature>
<feature type="binding site" evidence="1">
    <location>
        <position position="253"/>
    </location>
    <ligand>
        <name>Ni(2+)</name>
        <dbReference type="ChEBI" id="CHEBI:49786"/>
        <label>2</label>
    </ligand>
</feature>
<feature type="binding site" evidence="1">
    <location>
        <position position="279"/>
    </location>
    <ligand>
        <name>Ni(2+)</name>
        <dbReference type="ChEBI" id="CHEBI:49786"/>
        <label>2</label>
    </ligand>
</feature>
<feature type="binding site" evidence="1">
    <location>
        <position position="367"/>
    </location>
    <ligand>
        <name>Ni(2+)</name>
        <dbReference type="ChEBI" id="CHEBI:49786"/>
        <label>1</label>
    </ligand>
</feature>
<feature type="modified residue" description="N6-carboxylysine" evidence="1">
    <location>
        <position position="224"/>
    </location>
</feature>
<organism>
    <name type="scientific">Streptomyces avermitilis (strain ATCC 31267 / DSM 46492 / JCM 5070 / NBRC 14893 / NCIMB 12804 / NRRL 8165 / MA-4680)</name>
    <dbReference type="NCBI Taxonomy" id="227882"/>
    <lineage>
        <taxon>Bacteria</taxon>
        <taxon>Bacillati</taxon>
        <taxon>Actinomycetota</taxon>
        <taxon>Actinomycetes</taxon>
        <taxon>Kitasatosporales</taxon>
        <taxon>Streptomycetaceae</taxon>
        <taxon>Streptomyces</taxon>
    </lineage>
</organism>
<proteinExistence type="inferred from homology"/>
<accession>Q826R9</accession>
<gene>
    <name evidence="1" type="primary">ureC2</name>
    <name type="ordered locus">SAV_7106</name>
</gene>
<name>URE12_STRAW</name>
<sequence length="573" mass="60540">MPEISRPAYADLFGPTTGDRIRLADTDLLIEIEEDRSGGPGLAGDEAVFGGGKVIRESMGQARATRADGTPDTVITGVVIVDHWGIVKADVGMRDGRITGIGKAGNPDTMDGVHPDLVIGPETEIIAGNGRILTAGAIDAHVHLICPQIADEALGSGITTLVGGGTGPAEGSKATTVTPGPWHLARMLEAMEEYPLNFGLLGKGNTVSHDAMLSQIRGGALGLKLHEDWGSTPAVIDAALTVADRTGVQIAIHTDTLNEAGFVGDTLAAIGGRGIHAYHTEGAGGGHAPDIMSVVSEPHVLPSSTNPTRPFTVNTAEEHLDMLMVCHHLNPAVPEDLAFAESRIRPSTIGAEDILHDLGAISIISSDAQAMGRVGEVIMRTWQTAHVMKRRRGALPGDGRADNHRVRRYVAKYTINPALAQGLAREIGSVETGKLADLVLWEPAFFGVKPHLVIKGGQIAYAQMGDANASIPTPQPILPRPMFGAIGRAPASNSFNFVAPLAIEDGLPERLSLGKRFVAIESTRGVTKADMRENDARPRVRIDPDSFAVHIDGELVEATPAAELPMAQRYFLF</sequence>
<protein>
    <recommendedName>
        <fullName evidence="1">Urease subunit alpha 2</fullName>
        <ecNumber evidence="1">3.5.1.5</ecNumber>
    </recommendedName>
    <alternativeName>
        <fullName evidence="1">Urea amidohydrolase subunit alpha 2</fullName>
    </alternativeName>
</protein>
<evidence type="ECO:0000255" key="1">
    <source>
        <dbReference type="HAMAP-Rule" id="MF_01953"/>
    </source>
</evidence>